<name>PRTY1_CLUHA</name>
<feature type="peptide" id="PRO_0000044829" description="Protamine-YI">
    <location>
        <begin position="1"/>
        <end position="31"/>
    </location>
</feature>
<feature type="region of interest" description="Disordered" evidence="1">
    <location>
        <begin position="1"/>
        <end position="31"/>
    </location>
</feature>
<proteinExistence type="evidence at protein level"/>
<reference key="1">
    <citation type="submission" date="1970-08" db="PIR data bank">
        <authorList>
            <person name="Chang W.J."/>
            <person name="Nukushina M."/>
            <person name="Ishii S."/>
            <person name="Nakahara C."/>
            <person name="Ando T."/>
        </authorList>
    </citation>
    <scope>PROTEIN SEQUENCE</scope>
</reference>
<sequence>ARRRRSSSRPIRRRRPRRRTTRRRRAGRRRR</sequence>
<accession>P69012</accession>
<accession>P02337</accession>
<organism>
    <name type="scientific">Clupea harengus</name>
    <name type="common">Atlantic herring</name>
    <dbReference type="NCBI Taxonomy" id="7950"/>
    <lineage>
        <taxon>Eukaryota</taxon>
        <taxon>Metazoa</taxon>
        <taxon>Chordata</taxon>
        <taxon>Craniata</taxon>
        <taxon>Vertebrata</taxon>
        <taxon>Euteleostomi</taxon>
        <taxon>Actinopterygii</taxon>
        <taxon>Neopterygii</taxon>
        <taxon>Teleostei</taxon>
        <taxon>Clupei</taxon>
        <taxon>Clupeiformes</taxon>
        <taxon>Clupeoidei</taxon>
        <taxon>Clupeidae</taxon>
        <taxon>Clupea</taxon>
    </lineage>
</organism>
<evidence type="ECO:0000256" key="1">
    <source>
        <dbReference type="SAM" id="MobiDB-lite"/>
    </source>
</evidence>
<comment type="function">
    <text>Protamines substitute for histones in the chromatin of sperm during the haploid phase of spermatogenesis. They compact sperm DNA into a highly condensed, stable and inactive complex.</text>
</comment>
<comment type="subcellular location">
    <subcellularLocation>
        <location>Nucleus</location>
    </subcellularLocation>
    <subcellularLocation>
        <location>Chromosome</location>
    </subcellularLocation>
</comment>
<comment type="tissue specificity">
    <text>Testis.</text>
</comment>
<keyword id="KW-0158">Chromosome</keyword>
<keyword id="KW-0217">Developmental protein</keyword>
<keyword id="KW-0221">Differentiation</keyword>
<keyword id="KW-0903">Direct protein sequencing</keyword>
<keyword id="KW-0226">DNA condensation</keyword>
<keyword id="KW-0238">DNA-binding</keyword>
<keyword id="KW-0544">Nucleosome core</keyword>
<keyword id="KW-0539">Nucleus</keyword>
<keyword id="KW-1185">Reference proteome</keyword>
<keyword id="KW-0744">Spermatogenesis</keyword>
<dbReference type="PIR" id="A37577">
    <property type="entry name" value="CLHR1A"/>
</dbReference>
<dbReference type="Proteomes" id="UP000515152">
    <property type="component" value="Unplaced"/>
</dbReference>
<dbReference type="GO" id="GO:0000786">
    <property type="term" value="C:nucleosome"/>
    <property type="evidence" value="ECO:0007669"/>
    <property type="project" value="UniProtKB-KW"/>
</dbReference>
<dbReference type="GO" id="GO:0005634">
    <property type="term" value="C:nucleus"/>
    <property type="evidence" value="ECO:0007669"/>
    <property type="project" value="UniProtKB-SubCell"/>
</dbReference>
<dbReference type="GO" id="GO:0003677">
    <property type="term" value="F:DNA binding"/>
    <property type="evidence" value="ECO:0007669"/>
    <property type="project" value="UniProtKB-KW"/>
</dbReference>
<dbReference type="GO" id="GO:0030154">
    <property type="term" value="P:cell differentiation"/>
    <property type="evidence" value="ECO:0007669"/>
    <property type="project" value="UniProtKB-KW"/>
</dbReference>
<dbReference type="GO" id="GO:0030261">
    <property type="term" value="P:chromosome condensation"/>
    <property type="evidence" value="ECO:0007669"/>
    <property type="project" value="UniProtKB-KW"/>
</dbReference>
<dbReference type="GO" id="GO:0007283">
    <property type="term" value="P:spermatogenesis"/>
    <property type="evidence" value="ECO:0007669"/>
    <property type="project" value="UniProtKB-KW"/>
</dbReference>
<protein>
    <recommendedName>
        <fullName>Protamine-YI</fullName>
    </recommendedName>
    <alternativeName>
        <fullName>Clupeine-YI</fullName>
    </alternativeName>
</protein>